<protein>
    <recommendedName>
        <fullName evidence="1">Undecaprenyl-diphosphatase</fullName>
        <ecNumber evidence="1">3.6.1.27</ecNumber>
    </recommendedName>
    <alternativeName>
        <fullName evidence="1">Bacitracin resistance protein</fullName>
    </alternativeName>
    <alternativeName>
        <fullName evidence="1">Undecaprenyl pyrophosphate phosphatase</fullName>
    </alternativeName>
</protein>
<name>UPPP_CAUSK</name>
<comment type="function">
    <text evidence="1">Catalyzes the dephosphorylation of undecaprenyl diphosphate (UPP). Confers resistance to bacitracin.</text>
</comment>
<comment type="catalytic activity">
    <reaction evidence="1">
        <text>di-trans,octa-cis-undecaprenyl diphosphate + H2O = di-trans,octa-cis-undecaprenyl phosphate + phosphate + H(+)</text>
        <dbReference type="Rhea" id="RHEA:28094"/>
        <dbReference type="ChEBI" id="CHEBI:15377"/>
        <dbReference type="ChEBI" id="CHEBI:15378"/>
        <dbReference type="ChEBI" id="CHEBI:43474"/>
        <dbReference type="ChEBI" id="CHEBI:58405"/>
        <dbReference type="ChEBI" id="CHEBI:60392"/>
        <dbReference type="EC" id="3.6.1.27"/>
    </reaction>
</comment>
<comment type="subcellular location">
    <subcellularLocation>
        <location evidence="1">Cell inner membrane</location>
        <topology evidence="1">Multi-pass membrane protein</topology>
    </subcellularLocation>
</comment>
<comment type="miscellaneous">
    <text>Bacitracin is thought to be involved in the inhibition of peptidoglycan synthesis by sequestering undecaprenyl diphosphate, thereby reducing the pool of lipid carrier available.</text>
</comment>
<comment type="similarity">
    <text evidence="1">Belongs to the UppP family.</text>
</comment>
<gene>
    <name evidence="1" type="primary">uppP</name>
    <name type="ordered locus">Caul_4952</name>
</gene>
<organism>
    <name type="scientific">Caulobacter sp. (strain K31)</name>
    <dbReference type="NCBI Taxonomy" id="366602"/>
    <lineage>
        <taxon>Bacteria</taxon>
        <taxon>Pseudomonadati</taxon>
        <taxon>Pseudomonadota</taxon>
        <taxon>Alphaproteobacteria</taxon>
        <taxon>Caulobacterales</taxon>
        <taxon>Caulobacteraceae</taxon>
        <taxon>Caulobacter</taxon>
    </lineage>
</organism>
<sequence>MPDWLIAIVLGLVEGLTEFIPVSSTGHLLLTKIALGLTDPAWDTFIVLIQLGAVLGVVALYFQRLWAVVVGLPTQPEARRFALTVLIGCIPAFAAGLALHGVIKHFFENPYLPQVICVSLILGGVILLVVDKKAPPPREMDGMALSLKTAALIGLFQCLSLLPGVSRSGSTIVGSMLIGVDRKAAAEFSFFMAIPIMVGAFALDLLKSYKDIDASHAGAIAIGFVVSFLSGLVVVKFLIDFVGKRGFTPFAWWRIVVGVIGLGLIYIPR</sequence>
<evidence type="ECO:0000255" key="1">
    <source>
        <dbReference type="HAMAP-Rule" id="MF_01006"/>
    </source>
</evidence>
<feature type="chain" id="PRO_1000083976" description="Undecaprenyl-diphosphatase">
    <location>
        <begin position="1"/>
        <end position="269"/>
    </location>
</feature>
<feature type="transmembrane region" description="Helical" evidence="1">
    <location>
        <begin position="42"/>
        <end position="62"/>
    </location>
</feature>
<feature type="transmembrane region" description="Helical" evidence="1">
    <location>
        <begin position="83"/>
        <end position="103"/>
    </location>
</feature>
<feature type="transmembrane region" description="Helical" evidence="1">
    <location>
        <begin position="110"/>
        <end position="130"/>
    </location>
</feature>
<feature type="transmembrane region" description="Helical" evidence="1">
    <location>
        <begin position="142"/>
        <end position="162"/>
    </location>
</feature>
<feature type="transmembrane region" description="Helical" evidence="1">
    <location>
        <begin position="186"/>
        <end position="206"/>
    </location>
</feature>
<feature type="transmembrane region" description="Helical" evidence="1">
    <location>
        <begin position="219"/>
        <end position="239"/>
    </location>
</feature>
<feature type="transmembrane region" description="Helical" evidence="1">
    <location>
        <begin position="247"/>
        <end position="267"/>
    </location>
</feature>
<keyword id="KW-0046">Antibiotic resistance</keyword>
<keyword id="KW-0997">Cell inner membrane</keyword>
<keyword id="KW-1003">Cell membrane</keyword>
<keyword id="KW-0133">Cell shape</keyword>
<keyword id="KW-0961">Cell wall biogenesis/degradation</keyword>
<keyword id="KW-0378">Hydrolase</keyword>
<keyword id="KW-0472">Membrane</keyword>
<keyword id="KW-0573">Peptidoglycan synthesis</keyword>
<keyword id="KW-0812">Transmembrane</keyword>
<keyword id="KW-1133">Transmembrane helix</keyword>
<proteinExistence type="inferred from homology"/>
<dbReference type="EC" id="3.6.1.27" evidence="1"/>
<dbReference type="EMBL" id="CP000927">
    <property type="protein sequence ID" value="ABZ74072.1"/>
    <property type="molecule type" value="Genomic_DNA"/>
</dbReference>
<dbReference type="SMR" id="B0T669"/>
<dbReference type="STRING" id="366602.Caul_4952"/>
<dbReference type="KEGG" id="cak:Caul_4952"/>
<dbReference type="eggNOG" id="COG1968">
    <property type="taxonomic scope" value="Bacteria"/>
</dbReference>
<dbReference type="HOGENOM" id="CLU_060296_2_0_5"/>
<dbReference type="OrthoDB" id="9808289at2"/>
<dbReference type="GO" id="GO:0005886">
    <property type="term" value="C:plasma membrane"/>
    <property type="evidence" value="ECO:0007669"/>
    <property type="project" value="UniProtKB-SubCell"/>
</dbReference>
<dbReference type="GO" id="GO:0050380">
    <property type="term" value="F:undecaprenyl-diphosphatase activity"/>
    <property type="evidence" value="ECO:0007669"/>
    <property type="project" value="UniProtKB-UniRule"/>
</dbReference>
<dbReference type="GO" id="GO:0071555">
    <property type="term" value="P:cell wall organization"/>
    <property type="evidence" value="ECO:0007669"/>
    <property type="project" value="UniProtKB-KW"/>
</dbReference>
<dbReference type="GO" id="GO:0009252">
    <property type="term" value="P:peptidoglycan biosynthetic process"/>
    <property type="evidence" value="ECO:0007669"/>
    <property type="project" value="UniProtKB-KW"/>
</dbReference>
<dbReference type="GO" id="GO:0008360">
    <property type="term" value="P:regulation of cell shape"/>
    <property type="evidence" value="ECO:0007669"/>
    <property type="project" value="UniProtKB-KW"/>
</dbReference>
<dbReference type="GO" id="GO:0046677">
    <property type="term" value="P:response to antibiotic"/>
    <property type="evidence" value="ECO:0007669"/>
    <property type="project" value="UniProtKB-UniRule"/>
</dbReference>
<dbReference type="HAMAP" id="MF_01006">
    <property type="entry name" value="Undec_diphosphatase"/>
    <property type="match status" value="1"/>
</dbReference>
<dbReference type="InterPro" id="IPR003824">
    <property type="entry name" value="UppP"/>
</dbReference>
<dbReference type="NCBIfam" id="NF001389">
    <property type="entry name" value="PRK00281.1-2"/>
    <property type="match status" value="1"/>
</dbReference>
<dbReference type="NCBIfam" id="NF001390">
    <property type="entry name" value="PRK00281.1-4"/>
    <property type="match status" value="1"/>
</dbReference>
<dbReference type="NCBIfam" id="TIGR00753">
    <property type="entry name" value="undec_PP_bacA"/>
    <property type="match status" value="1"/>
</dbReference>
<dbReference type="PANTHER" id="PTHR30622">
    <property type="entry name" value="UNDECAPRENYL-DIPHOSPHATASE"/>
    <property type="match status" value="1"/>
</dbReference>
<dbReference type="PANTHER" id="PTHR30622:SF3">
    <property type="entry name" value="UNDECAPRENYL-DIPHOSPHATASE"/>
    <property type="match status" value="1"/>
</dbReference>
<dbReference type="Pfam" id="PF02673">
    <property type="entry name" value="BacA"/>
    <property type="match status" value="1"/>
</dbReference>
<accession>B0T669</accession>
<reference key="1">
    <citation type="submission" date="2008-01" db="EMBL/GenBank/DDBJ databases">
        <title>Complete sequence of chromosome of Caulobacter sp. K31.</title>
        <authorList>
            <consortium name="US DOE Joint Genome Institute"/>
            <person name="Copeland A."/>
            <person name="Lucas S."/>
            <person name="Lapidus A."/>
            <person name="Barry K."/>
            <person name="Glavina del Rio T."/>
            <person name="Dalin E."/>
            <person name="Tice H."/>
            <person name="Pitluck S."/>
            <person name="Bruce D."/>
            <person name="Goodwin L."/>
            <person name="Thompson L.S."/>
            <person name="Brettin T."/>
            <person name="Detter J.C."/>
            <person name="Han C."/>
            <person name="Schmutz J."/>
            <person name="Larimer F."/>
            <person name="Land M."/>
            <person name="Hauser L."/>
            <person name="Kyrpides N."/>
            <person name="Kim E."/>
            <person name="Stephens C."/>
            <person name="Richardson P."/>
        </authorList>
    </citation>
    <scope>NUCLEOTIDE SEQUENCE [LARGE SCALE GENOMIC DNA]</scope>
    <source>
        <strain>K31</strain>
    </source>
</reference>